<feature type="chain" id="PRO_0000314513" description="Ribosomal RNA large subunit methyltransferase M">
    <location>
        <begin position="1"/>
        <end position="366"/>
    </location>
</feature>
<feature type="active site" description="Proton acceptor" evidence="1">
    <location>
        <position position="306"/>
    </location>
</feature>
<feature type="binding site" evidence="1">
    <location>
        <position position="188"/>
    </location>
    <ligand>
        <name>S-adenosyl-L-methionine</name>
        <dbReference type="ChEBI" id="CHEBI:59789"/>
    </ligand>
</feature>
<feature type="binding site" evidence="1">
    <location>
        <begin position="221"/>
        <end position="224"/>
    </location>
    <ligand>
        <name>S-adenosyl-L-methionine</name>
        <dbReference type="ChEBI" id="CHEBI:59789"/>
    </ligand>
</feature>
<feature type="binding site" evidence="1">
    <location>
        <position position="240"/>
    </location>
    <ligand>
        <name>S-adenosyl-L-methionine</name>
        <dbReference type="ChEBI" id="CHEBI:59789"/>
    </ligand>
</feature>
<feature type="binding site" evidence="1">
    <location>
        <position position="260"/>
    </location>
    <ligand>
        <name>S-adenosyl-L-methionine</name>
        <dbReference type="ChEBI" id="CHEBI:59789"/>
    </ligand>
</feature>
<feature type="binding site" evidence="1">
    <location>
        <position position="277"/>
    </location>
    <ligand>
        <name>S-adenosyl-L-methionine</name>
        <dbReference type="ChEBI" id="CHEBI:59789"/>
    </ligand>
</feature>
<sequence>MNKVVLLCRPGFEKECAAEITDKAGQREIFGFARVKENAGYVIYECYQPDDGDKLIRELPFSSLIFARQWFVVGELLQHLPPEDRITPIVGMLQGVVEKGGELRVEVADTNESKELLKFCRKFTVPLRAALRDAGVLANYETPKRPVVHVFFIAPGCCYTGYSYSSNNSPFYMGIPRLKFPADAPSRSTLKLEEAFHVFIPADEWDERLANGMWAVDLGACPGGWTYQLVKRNMWVYSVDNGPMAQSLMDTGQVTWLREDGFKFRPTCSNISWMVCDMVEKPAKVAALMAQWLVNGWCRETIFNLKLPMKKRYEEVSHNLAYIQAQLDEHGINAQIQARQLYHDREEVTVHVRRIWAAVGGRRDER</sequence>
<protein>
    <recommendedName>
        <fullName evidence="1">Ribosomal RNA large subunit methyltransferase M</fullName>
        <ecNumber evidence="1">2.1.1.186</ecNumber>
    </recommendedName>
    <alternativeName>
        <fullName evidence="1">23S rRNA (cytidine2498-2'-O)-methyltransferase</fullName>
    </alternativeName>
    <alternativeName>
        <fullName evidence="1">23S rRNA 2'-O-ribose methyltransferase RlmM</fullName>
    </alternativeName>
</protein>
<proteinExistence type="inferred from homology"/>
<reference key="1">
    <citation type="journal article" date="2006" name="Proc. Natl. Acad. Sci. U.S.A.">
        <title>Identification of genes subject to positive selection in uropathogenic strains of Escherichia coli: a comparative genomics approach.</title>
        <authorList>
            <person name="Chen S.L."/>
            <person name="Hung C.-S."/>
            <person name="Xu J."/>
            <person name="Reigstad C.S."/>
            <person name="Magrini V."/>
            <person name="Sabo A."/>
            <person name="Blasiar D."/>
            <person name="Bieri T."/>
            <person name="Meyer R.R."/>
            <person name="Ozersky P."/>
            <person name="Armstrong J.R."/>
            <person name="Fulton R.S."/>
            <person name="Latreille J.P."/>
            <person name="Spieth J."/>
            <person name="Hooton T.M."/>
            <person name="Mardis E.R."/>
            <person name="Hultgren S.J."/>
            <person name="Gordon J.I."/>
        </authorList>
    </citation>
    <scope>NUCLEOTIDE SEQUENCE [LARGE SCALE GENOMIC DNA]</scope>
    <source>
        <strain>UTI89 / UPEC</strain>
    </source>
</reference>
<comment type="function">
    <text evidence="1">Catalyzes the 2'-O-methylation at nucleotide C2498 in 23S rRNA.</text>
</comment>
<comment type="catalytic activity">
    <reaction evidence="1">
        <text>cytidine(2498) in 23S rRNA + S-adenosyl-L-methionine = 2'-O-methylcytidine(2498) in 23S rRNA + S-adenosyl-L-homocysteine + H(+)</text>
        <dbReference type="Rhea" id="RHEA:42788"/>
        <dbReference type="Rhea" id="RHEA-COMP:10244"/>
        <dbReference type="Rhea" id="RHEA-COMP:10245"/>
        <dbReference type="ChEBI" id="CHEBI:15378"/>
        <dbReference type="ChEBI" id="CHEBI:57856"/>
        <dbReference type="ChEBI" id="CHEBI:59789"/>
        <dbReference type="ChEBI" id="CHEBI:74495"/>
        <dbReference type="ChEBI" id="CHEBI:82748"/>
        <dbReference type="EC" id="2.1.1.186"/>
    </reaction>
</comment>
<comment type="subunit">
    <text evidence="1">Monomer.</text>
</comment>
<comment type="subcellular location">
    <subcellularLocation>
        <location evidence="1">Cytoplasm</location>
    </subcellularLocation>
</comment>
<comment type="similarity">
    <text evidence="1">Belongs to the class I-like SAM-binding methyltransferase superfamily. RNA methyltransferase RlmE family. RlmM subfamily.</text>
</comment>
<gene>
    <name evidence="1" type="primary">rlmM</name>
    <name type="ordered locus">UTI89_C3178</name>
</gene>
<keyword id="KW-0963">Cytoplasm</keyword>
<keyword id="KW-0489">Methyltransferase</keyword>
<keyword id="KW-0698">rRNA processing</keyword>
<keyword id="KW-0949">S-adenosyl-L-methionine</keyword>
<keyword id="KW-0808">Transferase</keyword>
<evidence type="ECO:0000255" key="1">
    <source>
        <dbReference type="HAMAP-Rule" id="MF_01551"/>
    </source>
</evidence>
<dbReference type="EC" id="2.1.1.186" evidence="1"/>
<dbReference type="EMBL" id="CP000243">
    <property type="protein sequence ID" value="ABE08630.1"/>
    <property type="molecule type" value="Genomic_DNA"/>
</dbReference>
<dbReference type="RefSeq" id="WP_001045527.1">
    <property type="nucleotide sequence ID" value="NZ_CP064825.1"/>
</dbReference>
<dbReference type="SMR" id="Q1R7N4"/>
<dbReference type="KEGG" id="eci:UTI89_C3178"/>
<dbReference type="HOGENOM" id="CLU_043780_0_0_6"/>
<dbReference type="Proteomes" id="UP000001952">
    <property type="component" value="Chromosome"/>
</dbReference>
<dbReference type="GO" id="GO:0005737">
    <property type="term" value="C:cytoplasm"/>
    <property type="evidence" value="ECO:0007669"/>
    <property type="project" value="UniProtKB-SubCell"/>
</dbReference>
<dbReference type="GO" id="GO:0008757">
    <property type="term" value="F:S-adenosylmethionine-dependent methyltransferase activity"/>
    <property type="evidence" value="ECO:0007669"/>
    <property type="project" value="UniProtKB-UniRule"/>
</dbReference>
<dbReference type="GO" id="GO:0032259">
    <property type="term" value="P:methylation"/>
    <property type="evidence" value="ECO:0007669"/>
    <property type="project" value="UniProtKB-KW"/>
</dbReference>
<dbReference type="GO" id="GO:0006364">
    <property type="term" value="P:rRNA processing"/>
    <property type="evidence" value="ECO:0007669"/>
    <property type="project" value="UniProtKB-UniRule"/>
</dbReference>
<dbReference type="FunFam" id="3.30.2300.20:FF:000001">
    <property type="entry name" value="Ribosomal RNA large subunit methyltransferase M"/>
    <property type="match status" value="1"/>
</dbReference>
<dbReference type="FunFam" id="3.30.70.2810:FF:000001">
    <property type="entry name" value="Ribosomal RNA large subunit methyltransferase M"/>
    <property type="match status" value="1"/>
</dbReference>
<dbReference type="FunFam" id="3.40.50.150:FF:000020">
    <property type="entry name" value="Ribosomal RNA large subunit methyltransferase M"/>
    <property type="match status" value="1"/>
</dbReference>
<dbReference type="Gene3D" id="3.30.2300.20">
    <property type="match status" value="1"/>
</dbReference>
<dbReference type="Gene3D" id="3.30.70.2810">
    <property type="match status" value="1"/>
</dbReference>
<dbReference type="Gene3D" id="3.40.50.150">
    <property type="entry name" value="Vaccinia Virus protein VP39"/>
    <property type="match status" value="1"/>
</dbReference>
<dbReference type="HAMAP" id="MF_01551">
    <property type="entry name" value="23SrRNA_methyltr_M"/>
    <property type="match status" value="1"/>
</dbReference>
<dbReference type="InterPro" id="IPR040739">
    <property type="entry name" value="RlmM_FDX"/>
</dbReference>
<dbReference type="InterPro" id="IPR048646">
    <property type="entry name" value="RlmM_THUMP-like"/>
</dbReference>
<dbReference type="InterPro" id="IPR002877">
    <property type="entry name" value="RNA_MeTrfase_FtsJ_dom"/>
</dbReference>
<dbReference type="InterPro" id="IPR011224">
    <property type="entry name" value="rRNA_MeTrfase_M"/>
</dbReference>
<dbReference type="InterPro" id="IPR029063">
    <property type="entry name" value="SAM-dependent_MTases_sf"/>
</dbReference>
<dbReference type="NCBIfam" id="NF008734">
    <property type="entry name" value="PRK11760.1"/>
    <property type="match status" value="1"/>
</dbReference>
<dbReference type="PANTHER" id="PTHR37524">
    <property type="entry name" value="RIBOSOMAL RNA LARGE SUBUNIT METHYLTRANSFERASE M"/>
    <property type="match status" value="1"/>
</dbReference>
<dbReference type="PANTHER" id="PTHR37524:SF2">
    <property type="entry name" value="RIBOSOMAL RNA METHYLTRANSFERASE FTSJ DOMAIN-CONTAINING PROTEIN"/>
    <property type="match status" value="1"/>
</dbReference>
<dbReference type="Pfam" id="PF01728">
    <property type="entry name" value="FtsJ"/>
    <property type="match status" value="1"/>
</dbReference>
<dbReference type="Pfam" id="PF18125">
    <property type="entry name" value="RlmM_FDX"/>
    <property type="match status" value="1"/>
</dbReference>
<dbReference type="Pfam" id="PF21239">
    <property type="entry name" value="RLMM_N"/>
    <property type="match status" value="1"/>
</dbReference>
<dbReference type="PIRSF" id="PIRSF028774">
    <property type="entry name" value="UCP028774"/>
    <property type="match status" value="1"/>
</dbReference>
<dbReference type="SUPFAM" id="SSF53335">
    <property type="entry name" value="S-adenosyl-L-methionine-dependent methyltransferases"/>
    <property type="match status" value="1"/>
</dbReference>
<accession>Q1R7N4</accession>
<name>RLMM_ECOUT</name>
<organism>
    <name type="scientific">Escherichia coli (strain UTI89 / UPEC)</name>
    <dbReference type="NCBI Taxonomy" id="364106"/>
    <lineage>
        <taxon>Bacteria</taxon>
        <taxon>Pseudomonadati</taxon>
        <taxon>Pseudomonadota</taxon>
        <taxon>Gammaproteobacteria</taxon>
        <taxon>Enterobacterales</taxon>
        <taxon>Enterobacteriaceae</taxon>
        <taxon>Escherichia</taxon>
    </lineage>
</organism>